<name>GLTJ_ECOLI</name>
<sequence>MSIDWNWGIFLQQAPFGNTTYLGWIWSGFQVTIALSICAWIIAFLVGSFFGILRTVPNRFLSGLGTLYVELFRNVPLIVQFFTWYLVIPELLPEKIGMWFKAELDPNIQFFLSSMLCLGLFTAARVCEQVRAAIQSLPRGQKNAALAMGLTLPQAYRYVLLPNAYRVIVPPMTSEMMNLVKNSAIASTIGLVDMAAQAGKLLDYSAHAWESFTAITLAYVLINAFIMLVMTLVERKVRLPGNMGGK</sequence>
<proteinExistence type="evidence at protein level"/>
<protein>
    <recommendedName>
        <fullName evidence="5">Glutamate/aspartate import permease protein GltJ</fullName>
    </recommendedName>
</protein>
<gene>
    <name type="primary">gltJ</name>
    <name type="ordered locus">b0654</name>
    <name type="ordered locus">JW0649</name>
</gene>
<accession>P0AER3</accession>
<accession>P41074</accession>
<feature type="chain" id="PRO_0000060035" description="Glutamate/aspartate import permease protein GltJ">
    <location>
        <begin position="1"/>
        <end position="246"/>
    </location>
</feature>
<feature type="topological domain" description="Periplasmic" evidence="5">
    <location>
        <begin position="1"/>
        <end position="32"/>
    </location>
</feature>
<feature type="transmembrane region" description="Helical" evidence="1">
    <location>
        <begin position="33"/>
        <end position="53"/>
    </location>
</feature>
<feature type="topological domain" description="Cytoplasmic" evidence="5">
    <location>
        <begin position="54"/>
        <end position="73"/>
    </location>
</feature>
<feature type="transmembrane region" description="Helical" evidence="1">
    <location>
        <begin position="74"/>
        <end position="94"/>
    </location>
</feature>
<feature type="topological domain" description="Periplasmic" evidence="5">
    <location>
        <begin position="95"/>
        <end position="103"/>
    </location>
</feature>
<feature type="transmembrane region" description="Helical" evidence="1">
    <location>
        <begin position="104"/>
        <end position="124"/>
    </location>
</feature>
<feature type="topological domain" description="Cytoplasmic" evidence="5">
    <location>
        <begin position="125"/>
        <end position="178"/>
    </location>
</feature>
<feature type="transmembrane region" description="Helical" evidence="1">
    <location>
        <begin position="179"/>
        <end position="196"/>
    </location>
</feature>
<feature type="topological domain" description="Periplasmic" evidence="5">
    <location>
        <begin position="197"/>
        <end position="211"/>
    </location>
</feature>
<feature type="transmembrane region" description="Helical" evidence="1">
    <location>
        <begin position="212"/>
        <end position="232"/>
    </location>
</feature>
<feature type="topological domain" description="Cytoplasmic" evidence="3">
    <location>
        <begin position="233"/>
        <end position="246"/>
    </location>
</feature>
<feature type="domain" description="ABC transmembrane type-1" evidence="2">
    <location>
        <begin position="29"/>
        <end position="230"/>
    </location>
</feature>
<dbReference type="EMBL" id="U10981">
    <property type="protein sequence ID" value="AAA60980.1"/>
    <property type="molecule type" value="Genomic_DNA"/>
</dbReference>
<dbReference type="EMBL" id="U82598">
    <property type="protein sequence ID" value="AAB40855.1"/>
    <property type="molecule type" value="Genomic_DNA"/>
</dbReference>
<dbReference type="EMBL" id="U00096">
    <property type="protein sequence ID" value="AAC73755.1"/>
    <property type="molecule type" value="Genomic_DNA"/>
</dbReference>
<dbReference type="EMBL" id="AP009048">
    <property type="protein sequence ID" value="BAA35306.1"/>
    <property type="molecule type" value="Genomic_DNA"/>
</dbReference>
<dbReference type="PIR" id="D64800">
    <property type="entry name" value="D64800"/>
</dbReference>
<dbReference type="RefSeq" id="NP_415187.1">
    <property type="nucleotide sequence ID" value="NC_000913.3"/>
</dbReference>
<dbReference type="RefSeq" id="WP_000020941.1">
    <property type="nucleotide sequence ID" value="NZ_STEB01000031.1"/>
</dbReference>
<dbReference type="SMR" id="P0AER3"/>
<dbReference type="BioGRID" id="4259914">
    <property type="interactions" value="10"/>
</dbReference>
<dbReference type="ComplexPortal" id="CPX-4324">
    <property type="entry name" value="Glutamate/aspartate ABC transporter complex"/>
</dbReference>
<dbReference type="DIP" id="DIP-35965N"/>
<dbReference type="FunCoup" id="P0AER3">
    <property type="interactions" value="427"/>
</dbReference>
<dbReference type="IntAct" id="P0AER3">
    <property type="interactions" value="6"/>
</dbReference>
<dbReference type="STRING" id="511145.b0654"/>
<dbReference type="TCDB" id="3.A.1.3.4">
    <property type="family name" value="the atp-binding cassette (abc) superfamily"/>
</dbReference>
<dbReference type="PaxDb" id="511145-b0654"/>
<dbReference type="EnsemblBacteria" id="AAC73755">
    <property type="protein sequence ID" value="AAC73755"/>
    <property type="gene ID" value="b0654"/>
</dbReference>
<dbReference type="GeneID" id="75204985"/>
<dbReference type="GeneID" id="945443"/>
<dbReference type="KEGG" id="ecj:JW0649"/>
<dbReference type="KEGG" id="eco:b0654"/>
<dbReference type="KEGG" id="ecoc:C3026_03270"/>
<dbReference type="PATRIC" id="fig|1411691.4.peg.1614"/>
<dbReference type="EchoBASE" id="EB2527"/>
<dbReference type="eggNOG" id="COG0765">
    <property type="taxonomic scope" value="Bacteria"/>
</dbReference>
<dbReference type="HOGENOM" id="CLU_019602_1_3_6"/>
<dbReference type="InParanoid" id="P0AER3"/>
<dbReference type="OMA" id="FGPLKMM"/>
<dbReference type="OrthoDB" id="6534575at2"/>
<dbReference type="PhylomeDB" id="P0AER3"/>
<dbReference type="BioCyc" id="EcoCyc:GLTJ-MONOMER"/>
<dbReference type="BioCyc" id="MetaCyc:GLTJ-MONOMER"/>
<dbReference type="PRO" id="PR:P0AER3"/>
<dbReference type="Proteomes" id="UP000000625">
    <property type="component" value="Chromosome"/>
</dbReference>
<dbReference type="GO" id="GO:0055052">
    <property type="term" value="C:ATP-binding cassette (ABC) transporter complex, substrate-binding subunit-containing"/>
    <property type="evidence" value="ECO:0000303"/>
    <property type="project" value="ComplexPortal"/>
</dbReference>
<dbReference type="GO" id="GO:0016020">
    <property type="term" value="C:membrane"/>
    <property type="evidence" value="ECO:0000303"/>
    <property type="project" value="ComplexPortal"/>
</dbReference>
<dbReference type="GO" id="GO:0005886">
    <property type="term" value="C:plasma membrane"/>
    <property type="evidence" value="ECO:0000314"/>
    <property type="project" value="EcoCyc"/>
</dbReference>
<dbReference type="GO" id="GO:0022857">
    <property type="term" value="F:transmembrane transporter activity"/>
    <property type="evidence" value="ECO:0007669"/>
    <property type="project" value="InterPro"/>
</dbReference>
<dbReference type="GO" id="GO:0006865">
    <property type="term" value="P:amino acid transport"/>
    <property type="evidence" value="ECO:0000318"/>
    <property type="project" value="GO_Central"/>
</dbReference>
<dbReference type="GO" id="GO:0140009">
    <property type="term" value="P:L-aspartate import across plasma membrane"/>
    <property type="evidence" value="ECO:0000303"/>
    <property type="project" value="ComplexPortal"/>
</dbReference>
<dbReference type="GO" id="GO:0098712">
    <property type="term" value="P:L-glutamate import across plasma membrane"/>
    <property type="evidence" value="ECO:0000303"/>
    <property type="project" value="ComplexPortal"/>
</dbReference>
<dbReference type="CDD" id="cd06261">
    <property type="entry name" value="TM_PBP2"/>
    <property type="match status" value="1"/>
</dbReference>
<dbReference type="FunFam" id="1.10.3720.10:FF:000021">
    <property type="entry name" value="Glutamate/aspartate ABC transporter, permease protein GltJ"/>
    <property type="match status" value="1"/>
</dbReference>
<dbReference type="Gene3D" id="1.10.3720.10">
    <property type="entry name" value="MetI-like"/>
    <property type="match status" value="1"/>
</dbReference>
<dbReference type="InterPro" id="IPR010065">
    <property type="entry name" value="AA_ABC_transptr_permease_3TM"/>
</dbReference>
<dbReference type="InterPro" id="IPR043429">
    <property type="entry name" value="ArtM/GltK/GlnP/TcyL/YhdX-like"/>
</dbReference>
<dbReference type="InterPro" id="IPR000515">
    <property type="entry name" value="MetI-like"/>
</dbReference>
<dbReference type="InterPro" id="IPR035906">
    <property type="entry name" value="MetI-like_sf"/>
</dbReference>
<dbReference type="NCBIfam" id="TIGR01726">
    <property type="entry name" value="HEQRo_perm_3TM"/>
    <property type="match status" value="1"/>
</dbReference>
<dbReference type="PANTHER" id="PTHR30614:SF42">
    <property type="entry name" value="GLUTAMATE_ASPARTATE IMPORT PERMEASE PROTEIN GLTJ"/>
    <property type="match status" value="1"/>
</dbReference>
<dbReference type="PANTHER" id="PTHR30614">
    <property type="entry name" value="MEMBRANE COMPONENT OF AMINO ACID ABC TRANSPORTER"/>
    <property type="match status" value="1"/>
</dbReference>
<dbReference type="Pfam" id="PF00528">
    <property type="entry name" value="BPD_transp_1"/>
    <property type="match status" value="1"/>
</dbReference>
<dbReference type="SUPFAM" id="SSF161098">
    <property type="entry name" value="MetI-like"/>
    <property type="match status" value="1"/>
</dbReference>
<dbReference type="PROSITE" id="PS50928">
    <property type="entry name" value="ABC_TM1"/>
    <property type="match status" value="1"/>
</dbReference>
<reference key="1">
    <citation type="submission" date="1994-06" db="EMBL/GenBank/DDBJ databases">
        <title>Sequence and characterisation of three genes of a glutamate-aspartate binding protein-dependent transport system of Escherichia coli K12.</title>
        <authorList>
            <person name="Lum D."/>
            <person name="Wallace B.J."/>
        </authorList>
    </citation>
    <scope>NUCLEOTIDE SEQUENCE [GENOMIC DNA]</scope>
    <source>
        <strain>K12 / BK9MDG</strain>
    </source>
</reference>
<reference key="2">
    <citation type="journal article" date="1996" name="DNA Res.">
        <title>A 718-kb DNA sequence of the Escherichia coli K-12 genome corresponding to the 12.7-28.0 min region on the linkage map.</title>
        <authorList>
            <person name="Oshima T."/>
            <person name="Aiba H."/>
            <person name="Baba T."/>
            <person name="Fujita K."/>
            <person name="Hayashi K."/>
            <person name="Honjo A."/>
            <person name="Ikemoto K."/>
            <person name="Inada T."/>
            <person name="Itoh T."/>
            <person name="Kajihara M."/>
            <person name="Kanai K."/>
            <person name="Kashimoto K."/>
            <person name="Kimura S."/>
            <person name="Kitagawa M."/>
            <person name="Makino K."/>
            <person name="Masuda S."/>
            <person name="Miki T."/>
            <person name="Mizobuchi K."/>
            <person name="Mori H."/>
            <person name="Motomura K."/>
            <person name="Nakamura Y."/>
            <person name="Nashimoto H."/>
            <person name="Nishio Y."/>
            <person name="Saito N."/>
            <person name="Sampei G."/>
            <person name="Seki Y."/>
            <person name="Tagami H."/>
            <person name="Takemoto K."/>
            <person name="Wada C."/>
            <person name="Yamamoto Y."/>
            <person name="Yano M."/>
            <person name="Horiuchi T."/>
        </authorList>
    </citation>
    <scope>NUCLEOTIDE SEQUENCE [LARGE SCALE GENOMIC DNA]</scope>
    <source>
        <strain>K12 / W3110 / ATCC 27325 / DSM 5911</strain>
    </source>
</reference>
<reference key="3">
    <citation type="submission" date="1997-01" db="EMBL/GenBank/DDBJ databases">
        <title>Sequence of minutes 4-25 of Escherichia coli.</title>
        <authorList>
            <person name="Chung E."/>
            <person name="Allen E."/>
            <person name="Araujo R."/>
            <person name="Aparicio A.M."/>
            <person name="Davis K."/>
            <person name="Duncan M."/>
            <person name="Federspiel N."/>
            <person name="Hyman R."/>
            <person name="Kalman S."/>
            <person name="Komp C."/>
            <person name="Kurdi O."/>
            <person name="Lew H."/>
            <person name="Lin D."/>
            <person name="Namath A."/>
            <person name="Oefner P."/>
            <person name="Roberts D."/>
            <person name="Schramm S."/>
            <person name="Davis R.W."/>
        </authorList>
    </citation>
    <scope>NUCLEOTIDE SEQUENCE [LARGE SCALE GENOMIC DNA]</scope>
    <source>
        <strain>K12 / MG1655 / ATCC 47076</strain>
    </source>
</reference>
<reference key="4">
    <citation type="journal article" date="1997" name="Science">
        <title>The complete genome sequence of Escherichia coli K-12.</title>
        <authorList>
            <person name="Blattner F.R."/>
            <person name="Plunkett G. III"/>
            <person name="Bloch C.A."/>
            <person name="Perna N.T."/>
            <person name="Burland V."/>
            <person name="Riley M."/>
            <person name="Collado-Vides J."/>
            <person name="Glasner J.D."/>
            <person name="Rode C.K."/>
            <person name="Mayhew G.F."/>
            <person name="Gregor J."/>
            <person name="Davis N.W."/>
            <person name="Kirkpatrick H.A."/>
            <person name="Goeden M.A."/>
            <person name="Rose D.J."/>
            <person name="Mau B."/>
            <person name="Shao Y."/>
        </authorList>
    </citation>
    <scope>NUCLEOTIDE SEQUENCE [LARGE SCALE GENOMIC DNA]</scope>
    <source>
        <strain>K12 / MG1655 / ATCC 47076</strain>
    </source>
</reference>
<reference key="5">
    <citation type="journal article" date="2006" name="Mol. Syst. Biol.">
        <title>Highly accurate genome sequences of Escherichia coli K-12 strains MG1655 and W3110.</title>
        <authorList>
            <person name="Hayashi K."/>
            <person name="Morooka N."/>
            <person name="Yamamoto Y."/>
            <person name="Fujita K."/>
            <person name="Isono K."/>
            <person name="Choi S."/>
            <person name="Ohtsubo E."/>
            <person name="Baba T."/>
            <person name="Wanner B.L."/>
            <person name="Mori H."/>
            <person name="Horiuchi T."/>
        </authorList>
    </citation>
    <scope>NUCLEOTIDE SEQUENCE [LARGE SCALE GENOMIC DNA]</scope>
    <source>
        <strain>K12 / W3110 / ATCC 27325 / DSM 5911</strain>
    </source>
</reference>
<reference key="6">
    <citation type="journal article" date="2005" name="Science">
        <title>Global topology analysis of the Escherichia coli inner membrane proteome.</title>
        <authorList>
            <person name="Daley D.O."/>
            <person name="Rapp M."/>
            <person name="Granseth E."/>
            <person name="Melen K."/>
            <person name="Drew D."/>
            <person name="von Heijne G."/>
        </authorList>
    </citation>
    <scope>TOPOLOGY [LARGE SCALE ANALYSIS]</scope>
    <scope>SUBCELLULAR LOCATION</scope>
    <source>
        <strain>K12 / MG1655 / ATCC 47076</strain>
    </source>
</reference>
<reference key="7">
    <citation type="journal article" date="2015" name="Proc. Natl. Acad. Sci. U.S.A.">
        <title>Contact-dependent growth inhibition toxins exploit multiple independent cell-entry pathways.</title>
        <authorList>
            <person name="Willett J.L."/>
            <person name="Gucinski G.C."/>
            <person name="Fatherree J.P."/>
            <person name="Low D.A."/>
            <person name="Hayes C.S."/>
        </authorList>
    </citation>
    <scope>RECEPTOR FOR CDI TOXIN ENTRY INTO TARGET CELL CYTOPLASM (MICROBIAL INFECTION)</scope>
    <scope>DISRUPTION PHENOTYPE</scope>
    <source>
        <strain>K12 / MC4100 / ATCC 35695 / DSM 6574</strain>
    </source>
</reference>
<reference key="8">
    <citation type="journal article" date="1998" name="Mol. Microbiol.">
        <title>The Escherichia coli ATP-binding cassette (ABC) proteins.</title>
        <authorList>
            <person name="Linton K.J."/>
            <person name="Higgins C.F."/>
        </authorList>
    </citation>
    <scope>REVIEW</scope>
</reference>
<organism>
    <name type="scientific">Escherichia coli (strain K12)</name>
    <dbReference type="NCBI Taxonomy" id="83333"/>
    <lineage>
        <taxon>Bacteria</taxon>
        <taxon>Pseudomonadati</taxon>
        <taxon>Pseudomonadota</taxon>
        <taxon>Gammaproteobacteria</taxon>
        <taxon>Enterobacterales</taxon>
        <taxon>Enterobacteriaceae</taxon>
        <taxon>Escherichia</taxon>
    </lineage>
</organism>
<comment type="function">
    <text evidence="6">Part of the ABC transporter complex GltIJKL involved in glutamate and aspartate uptake. Probably responsible for the translocation of the substrate across the membrane.</text>
</comment>
<comment type="function">
    <text evidence="4">(Microbial infection) Probably transports the toxic C-terminal region of CdiA from P.luminescens strain TTO1 across the inner membrane to the cytoplasm, where CdiA has a toxic effect. Toxin transport is strain-specific, mutations in this gene do not confer resistance to several other tested CdiA toxins.</text>
</comment>
<comment type="subunit">
    <text evidence="6">The complex is composed of two ATP-binding proteins (GltL), two transmembrane proteins (GltJ and GltK) and a solute-binding protein (GltI).</text>
</comment>
<comment type="subcellular location">
    <subcellularLocation>
        <location evidence="3">Cell inner membrane</location>
        <topology evidence="1">Multi-pass membrane protein</topology>
    </subcellularLocation>
</comment>
<comment type="disruption phenotype">
    <text evidence="4">Disruption confers resistance to cellular contact-dependent growth inhibition (CDI) CdiA of P.luminescens strain TTO1, but not to several other tested CdiA toxins.</text>
</comment>
<comment type="similarity">
    <text evidence="5">Belongs to the binding-protein-dependent transport system permease family. HisMQ subfamily.</text>
</comment>
<keyword id="KW-0029">Amino-acid transport</keyword>
<keyword id="KW-0997">Cell inner membrane</keyword>
<keyword id="KW-1003">Cell membrane</keyword>
<keyword id="KW-0472">Membrane</keyword>
<keyword id="KW-1185">Reference proteome</keyword>
<keyword id="KW-0812">Transmembrane</keyword>
<keyword id="KW-1133">Transmembrane helix</keyword>
<keyword id="KW-0813">Transport</keyword>
<evidence type="ECO:0000255" key="1"/>
<evidence type="ECO:0000255" key="2">
    <source>
        <dbReference type="PROSITE-ProRule" id="PRU00441"/>
    </source>
</evidence>
<evidence type="ECO:0000269" key="3">
    <source>
    </source>
</evidence>
<evidence type="ECO:0000269" key="4">
    <source>
    </source>
</evidence>
<evidence type="ECO:0000305" key="5"/>
<evidence type="ECO:0000305" key="6">
    <source>
    </source>
</evidence>